<feature type="chain" id="PRO_1000021855" description="Homoserine O-acetyltransferase">
    <location>
        <begin position="1"/>
        <end position="314"/>
    </location>
</feature>
<feature type="active site" description="Acyl-thioester intermediate" evidence="1">
    <location>
        <position position="142"/>
    </location>
</feature>
<feature type="active site" description="Proton acceptor" evidence="1">
    <location>
        <position position="235"/>
    </location>
</feature>
<feature type="active site" evidence="1">
    <location>
        <position position="237"/>
    </location>
</feature>
<feature type="binding site" evidence="1">
    <location>
        <position position="163"/>
    </location>
    <ligand>
        <name>substrate</name>
    </ligand>
</feature>
<feature type="binding site" evidence="1">
    <location>
        <position position="192"/>
    </location>
    <ligand>
        <name>substrate</name>
    </ligand>
</feature>
<feature type="binding site" evidence="1">
    <location>
        <position position="249"/>
    </location>
    <ligand>
        <name>substrate</name>
    </ligand>
</feature>
<feature type="site" description="Important for acyl-CoA specificity" evidence="1">
    <location>
        <position position="111"/>
    </location>
</feature>
<feature type="site" description="Important for substrate specificity" evidence="1">
    <location>
        <position position="192"/>
    </location>
</feature>
<accession>Q03K93</accession>
<evidence type="ECO:0000255" key="1">
    <source>
        <dbReference type="HAMAP-Rule" id="MF_00295"/>
    </source>
</evidence>
<keyword id="KW-0012">Acyltransferase</keyword>
<keyword id="KW-0028">Amino-acid biosynthesis</keyword>
<keyword id="KW-0963">Cytoplasm</keyword>
<keyword id="KW-0486">Methionine biosynthesis</keyword>
<keyword id="KW-0808">Transferase</keyword>
<organism>
    <name type="scientific">Streptococcus thermophilus (strain ATCC BAA-491 / LMD-9)</name>
    <dbReference type="NCBI Taxonomy" id="322159"/>
    <lineage>
        <taxon>Bacteria</taxon>
        <taxon>Bacillati</taxon>
        <taxon>Bacillota</taxon>
        <taxon>Bacilli</taxon>
        <taxon>Lactobacillales</taxon>
        <taxon>Streptococcaceae</taxon>
        <taxon>Streptococcus</taxon>
    </lineage>
</organism>
<proteinExistence type="inferred from homology"/>
<name>METAA_STRTD</name>
<sequence>MPIKLDNKLPALDVLRSENVFIMDENRASSQDIRPMEVLILNLMPTKEVTETQLLRLLANTPLQINVEFLYMASHKSKNTHAEHMETFYKTFDEIKDKYYDGLIVTGAPVEQMPFEEVDYWQELTRVFDWSKKHVYSTLHLCWGAQAGLYYKHGVDKVPLSEKLSGIYKQTVDMPENFLMNGFDDSFVSPHSRYTEVTLEDIKNKTDLDVVASGQEVGLSILASKDLREVYSFGHFEYDRDTLAREYRRDLEVGINPDVPANYFPGDDPSQEPKLRWNLAASTFFSNWINYAVYQETPYRLEELEDDFSFYGYL</sequence>
<gene>
    <name evidence="1" type="primary">metAA</name>
    <name type="ordered locus">STER_1189</name>
</gene>
<protein>
    <recommendedName>
        <fullName evidence="1">Homoserine O-acetyltransferase</fullName>
        <shortName evidence="1">HAT</shortName>
        <ecNumber evidence="1">2.3.1.31</ecNumber>
    </recommendedName>
    <alternativeName>
        <fullName evidence="1">Homoserine transacetylase</fullName>
        <shortName evidence="1">HTA</shortName>
    </alternativeName>
</protein>
<dbReference type="EC" id="2.3.1.31" evidence="1"/>
<dbReference type="EMBL" id="CP000419">
    <property type="protein sequence ID" value="ABJ66379.1"/>
    <property type="molecule type" value="Genomic_DNA"/>
</dbReference>
<dbReference type="SMR" id="Q03K93"/>
<dbReference type="KEGG" id="ste:STER_1189"/>
<dbReference type="HOGENOM" id="CLU_057851_0_1_9"/>
<dbReference type="UniPathway" id="UPA00051">
    <property type="reaction ID" value="UER00074"/>
</dbReference>
<dbReference type="GO" id="GO:0005737">
    <property type="term" value="C:cytoplasm"/>
    <property type="evidence" value="ECO:0007669"/>
    <property type="project" value="UniProtKB-SubCell"/>
</dbReference>
<dbReference type="GO" id="GO:0004414">
    <property type="term" value="F:homoserine O-acetyltransferase activity"/>
    <property type="evidence" value="ECO:0007669"/>
    <property type="project" value="UniProtKB-EC"/>
</dbReference>
<dbReference type="GO" id="GO:0008899">
    <property type="term" value="F:homoserine O-succinyltransferase activity"/>
    <property type="evidence" value="ECO:0007669"/>
    <property type="project" value="UniProtKB-UniRule"/>
</dbReference>
<dbReference type="GO" id="GO:0019281">
    <property type="term" value="P:L-methionine biosynthetic process from homoserine via O-succinyl-L-homoserine and cystathionine"/>
    <property type="evidence" value="ECO:0007669"/>
    <property type="project" value="InterPro"/>
</dbReference>
<dbReference type="CDD" id="cd03131">
    <property type="entry name" value="GATase1_HTS"/>
    <property type="match status" value="1"/>
</dbReference>
<dbReference type="FunFam" id="3.40.50.880:FF:000004">
    <property type="entry name" value="Homoserine O-succinyltransferase"/>
    <property type="match status" value="1"/>
</dbReference>
<dbReference type="Gene3D" id="3.40.50.880">
    <property type="match status" value="1"/>
</dbReference>
<dbReference type="HAMAP" id="MF_00295">
    <property type="entry name" value="MetA_acyltransf"/>
    <property type="match status" value="1"/>
</dbReference>
<dbReference type="InterPro" id="IPR029062">
    <property type="entry name" value="Class_I_gatase-like"/>
</dbReference>
<dbReference type="InterPro" id="IPR005697">
    <property type="entry name" value="HST_MetA"/>
</dbReference>
<dbReference type="InterPro" id="IPR033752">
    <property type="entry name" value="MetA_family"/>
</dbReference>
<dbReference type="NCBIfam" id="TIGR01001">
    <property type="entry name" value="metA"/>
    <property type="match status" value="1"/>
</dbReference>
<dbReference type="PANTHER" id="PTHR20919">
    <property type="entry name" value="HOMOSERINE O-SUCCINYLTRANSFERASE"/>
    <property type="match status" value="1"/>
</dbReference>
<dbReference type="PANTHER" id="PTHR20919:SF0">
    <property type="entry name" value="HOMOSERINE O-SUCCINYLTRANSFERASE"/>
    <property type="match status" value="1"/>
</dbReference>
<dbReference type="Pfam" id="PF04204">
    <property type="entry name" value="HTS"/>
    <property type="match status" value="1"/>
</dbReference>
<dbReference type="PIRSF" id="PIRSF000450">
    <property type="entry name" value="H_ser_succinyltr"/>
    <property type="match status" value="1"/>
</dbReference>
<dbReference type="SUPFAM" id="SSF52317">
    <property type="entry name" value="Class I glutamine amidotransferase-like"/>
    <property type="match status" value="1"/>
</dbReference>
<comment type="function">
    <text evidence="1">Transfers an acetyl group from acetyl-CoA to L-homoserine, forming acetyl-L-homoserine.</text>
</comment>
<comment type="catalytic activity">
    <reaction evidence="1">
        <text>L-homoserine + acetyl-CoA = O-acetyl-L-homoserine + CoA</text>
        <dbReference type="Rhea" id="RHEA:13701"/>
        <dbReference type="ChEBI" id="CHEBI:57287"/>
        <dbReference type="ChEBI" id="CHEBI:57288"/>
        <dbReference type="ChEBI" id="CHEBI:57476"/>
        <dbReference type="ChEBI" id="CHEBI:57716"/>
        <dbReference type="EC" id="2.3.1.31"/>
    </reaction>
</comment>
<comment type="pathway">
    <text evidence="1">Amino-acid biosynthesis; L-methionine biosynthesis via de novo pathway; O-acetyl-L-homoserine from L-homoserine: step 1/1.</text>
</comment>
<comment type="subcellular location">
    <subcellularLocation>
        <location evidence="1">Cytoplasm</location>
    </subcellularLocation>
</comment>
<comment type="similarity">
    <text evidence="1">Belongs to the MetA family.</text>
</comment>
<reference key="1">
    <citation type="journal article" date="2006" name="Proc. Natl. Acad. Sci. U.S.A.">
        <title>Comparative genomics of the lactic acid bacteria.</title>
        <authorList>
            <person name="Makarova K.S."/>
            <person name="Slesarev A."/>
            <person name="Wolf Y.I."/>
            <person name="Sorokin A."/>
            <person name="Mirkin B."/>
            <person name="Koonin E.V."/>
            <person name="Pavlov A."/>
            <person name="Pavlova N."/>
            <person name="Karamychev V."/>
            <person name="Polouchine N."/>
            <person name="Shakhova V."/>
            <person name="Grigoriev I."/>
            <person name="Lou Y."/>
            <person name="Rohksar D."/>
            <person name="Lucas S."/>
            <person name="Huang K."/>
            <person name="Goodstein D.M."/>
            <person name="Hawkins T."/>
            <person name="Plengvidhya V."/>
            <person name="Welker D."/>
            <person name="Hughes J."/>
            <person name="Goh Y."/>
            <person name="Benson A."/>
            <person name="Baldwin K."/>
            <person name="Lee J.-H."/>
            <person name="Diaz-Muniz I."/>
            <person name="Dosti B."/>
            <person name="Smeianov V."/>
            <person name="Wechter W."/>
            <person name="Barabote R."/>
            <person name="Lorca G."/>
            <person name="Altermann E."/>
            <person name="Barrangou R."/>
            <person name="Ganesan B."/>
            <person name="Xie Y."/>
            <person name="Rawsthorne H."/>
            <person name="Tamir D."/>
            <person name="Parker C."/>
            <person name="Breidt F."/>
            <person name="Broadbent J.R."/>
            <person name="Hutkins R."/>
            <person name="O'Sullivan D."/>
            <person name="Steele J."/>
            <person name="Unlu G."/>
            <person name="Saier M.H. Jr."/>
            <person name="Klaenhammer T."/>
            <person name="Richardson P."/>
            <person name="Kozyavkin S."/>
            <person name="Weimer B.C."/>
            <person name="Mills D.A."/>
        </authorList>
    </citation>
    <scope>NUCLEOTIDE SEQUENCE [LARGE SCALE GENOMIC DNA]</scope>
    <source>
        <strain>ATCC BAA-491 / LMD-9</strain>
    </source>
</reference>